<evidence type="ECO:0000255" key="1"/>
<evidence type="ECO:0000305" key="2"/>
<name>ZDS_SOLLC</name>
<proteinExistence type="evidence at transcript level"/>
<comment type="function">
    <text>Catalyzes the conversion of zeta-carotene to lycopene via the intermediary of neurosporene. It carries out two consecutive desaturations (introduction of double bonds) at positions C-7 and C-7'.</text>
</comment>
<comment type="catalytic activity">
    <reaction>
        <text>9,9'-di-cis-zeta-carotene + 2 a quinone = 7,7',9,9'-tetra-cis-lycopene + 2 a quinol</text>
        <dbReference type="Rhea" id="RHEA:30955"/>
        <dbReference type="ChEBI" id="CHEBI:24646"/>
        <dbReference type="ChEBI" id="CHEBI:48716"/>
        <dbReference type="ChEBI" id="CHEBI:62466"/>
        <dbReference type="ChEBI" id="CHEBI:132124"/>
        <dbReference type="EC" id="1.3.5.6"/>
    </reaction>
</comment>
<comment type="cofactor">
    <cofactor evidence="2">
        <name>NAD(+)</name>
        <dbReference type="ChEBI" id="CHEBI:57540"/>
    </cofactor>
    <cofactor evidence="2">
        <name>NADP(+)</name>
        <dbReference type="ChEBI" id="CHEBI:58349"/>
    </cofactor>
    <cofactor evidence="2">
        <name>FAD</name>
        <dbReference type="ChEBI" id="CHEBI:57692"/>
    </cofactor>
</comment>
<comment type="pathway">
    <text>Carotenoid biosynthesis; lycopene biosynthesis.</text>
</comment>
<comment type="subcellular location">
    <subcellularLocation>
        <location>Plastid</location>
        <location>Chloroplast</location>
    </subcellularLocation>
    <subcellularLocation>
        <location>Plastid</location>
        <location>Chromoplast</location>
    </subcellularLocation>
</comment>
<comment type="similarity">
    <text evidence="2">Belongs to the zeta carotene desaturase family.</text>
</comment>
<dbReference type="EC" id="1.3.5.6"/>
<dbReference type="EMBL" id="AF195507">
    <property type="protein sequence ID" value="AAF13698.1"/>
    <property type="molecule type" value="mRNA"/>
</dbReference>
<dbReference type="RefSeq" id="NP_001234383.2">
    <property type="nucleotide sequence ID" value="NM_001247454.2"/>
</dbReference>
<dbReference type="SMR" id="Q9SE20"/>
<dbReference type="FunCoup" id="Q9SE20">
    <property type="interactions" value="773"/>
</dbReference>
<dbReference type="STRING" id="4081.Q9SE20"/>
<dbReference type="PaxDb" id="4081-Solyc01g097810.2.1"/>
<dbReference type="GeneID" id="543629"/>
<dbReference type="KEGG" id="sly:543629"/>
<dbReference type="eggNOG" id="KOG0029">
    <property type="taxonomic scope" value="Eukaryota"/>
</dbReference>
<dbReference type="InParanoid" id="Q9SE20"/>
<dbReference type="OrthoDB" id="5046242at2759"/>
<dbReference type="BRENDA" id="1.3.5.6">
    <property type="organism ID" value="3101"/>
</dbReference>
<dbReference type="UniPathway" id="UPA00803"/>
<dbReference type="Proteomes" id="UP000004994">
    <property type="component" value="Unplaced"/>
</dbReference>
<dbReference type="ExpressionAtlas" id="Q9SE20">
    <property type="expression patterns" value="baseline and differential"/>
</dbReference>
<dbReference type="GO" id="GO:0009507">
    <property type="term" value="C:chloroplast"/>
    <property type="evidence" value="ECO:0007669"/>
    <property type="project" value="UniProtKB-SubCell"/>
</dbReference>
<dbReference type="GO" id="GO:0009509">
    <property type="term" value="C:chromoplast"/>
    <property type="evidence" value="ECO:0007669"/>
    <property type="project" value="UniProtKB-SubCell"/>
</dbReference>
<dbReference type="GO" id="GO:0016719">
    <property type="term" value="F:9,9'-di-cis-zeta-carotene desaturase activity"/>
    <property type="evidence" value="ECO:0000318"/>
    <property type="project" value="GO_Central"/>
</dbReference>
<dbReference type="GO" id="GO:0016120">
    <property type="term" value="P:carotene biosynthetic process"/>
    <property type="evidence" value="ECO:0000318"/>
    <property type="project" value="GO_Central"/>
</dbReference>
<dbReference type="GO" id="GO:0016117">
    <property type="term" value="P:carotenoid biosynthetic process"/>
    <property type="evidence" value="ECO:0007669"/>
    <property type="project" value="UniProtKB-KW"/>
</dbReference>
<dbReference type="FunFam" id="3.50.50.60:FF:000111">
    <property type="entry name" value="Zeta-carotene desaturase"/>
    <property type="match status" value="1"/>
</dbReference>
<dbReference type="Gene3D" id="3.50.50.60">
    <property type="entry name" value="FAD/NAD(P)-binding domain"/>
    <property type="match status" value="1"/>
</dbReference>
<dbReference type="InterPro" id="IPR002937">
    <property type="entry name" value="Amino_oxidase"/>
</dbReference>
<dbReference type="InterPro" id="IPR036188">
    <property type="entry name" value="FAD/NAD-bd_sf"/>
</dbReference>
<dbReference type="InterPro" id="IPR014103">
    <property type="entry name" value="Zeta_caro_desat"/>
</dbReference>
<dbReference type="InterPro" id="IPR050464">
    <property type="entry name" value="Zeta_carotene_desat/Oxidored"/>
</dbReference>
<dbReference type="NCBIfam" id="TIGR02732">
    <property type="entry name" value="zeta_caro_desat"/>
    <property type="match status" value="1"/>
</dbReference>
<dbReference type="PANTHER" id="PTHR42923">
    <property type="entry name" value="PROTOPORPHYRINOGEN OXIDASE"/>
    <property type="match status" value="1"/>
</dbReference>
<dbReference type="PANTHER" id="PTHR42923:SF41">
    <property type="entry name" value="ZETA-CAROTENE DESATURASE, CHLOROPLASTIC_CHROMOPLASTIC"/>
    <property type="match status" value="1"/>
</dbReference>
<dbReference type="Pfam" id="PF01593">
    <property type="entry name" value="Amino_oxidase"/>
    <property type="match status" value="1"/>
</dbReference>
<dbReference type="PRINTS" id="PR00419">
    <property type="entry name" value="ADXRDTASE"/>
</dbReference>
<dbReference type="SUPFAM" id="SSF51905">
    <property type="entry name" value="FAD/NAD(P)-binding domain"/>
    <property type="match status" value="1"/>
</dbReference>
<protein>
    <recommendedName>
        <fullName>Zeta-carotene desaturase, chloroplastic/chromoplastic</fullName>
        <ecNumber>1.3.5.6</ecNumber>
    </recommendedName>
    <alternativeName>
        <fullName>9,9'-di-cis-zeta-carotene desaturase</fullName>
    </alternativeName>
    <alternativeName>
        <fullName>Carotene 7,8-desaturase</fullName>
    </alternativeName>
</protein>
<organism>
    <name type="scientific">Solanum lycopersicum</name>
    <name type="common">Tomato</name>
    <name type="synonym">Lycopersicon esculentum</name>
    <dbReference type="NCBI Taxonomy" id="4081"/>
    <lineage>
        <taxon>Eukaryota</taxon>
        <taxon>Viridiplantae</taxon>
        <taxon>Streptophyta</taxon>
        <taxon>Embryophyta</taxon>
        <taxon>Tracheophyta</taxon>
        <taxon>Spermatophyta</taxon>
        <taxon>Magnoliopsida</taxon>
        <taxon>eudicotyledons</taxon>
        <taxon>Gunneridae</taxon>
        <taxon>Pentapetalae</taxon>
        <taxon>asterids</taxon>
        <taxon>lamiids</taxon>
        <taxon>Solanales</taxon>
        <taxon>Solanaceae</taxon>
        <taxon>Solanoideae</taxon>
        <taxon>Solaneae</taxon>
        <taxon>Solanum</taxon>
        <taxon>Solanum subgen. Lycopersicon</taxon>
    </lineage>
</organism>
<reference key="1">
    <citation type="online journal article" date="1999" name="Plant Gene Register">
        <title>Zeta-carotene desaturase from tomato.</title>
        <authorList>
            <person name="Bartley G.E."/>
            <person name="Ishida B.K."/>
        </authorList>
        <locator>PGR99-181</locator>
    </citation>
    <scope>NUCLEOTIDE SEQUENCE [MRNA]</scope>
</reference>
<accession>Q9SE20</accession>
<feature type="transit peptide" description="Chloroplast and chromoplast" evidence="1">
    <location>
        <begin position="1"/>
        <end status="unknown"/>
    </location>
</feature>
<feature type="chain" id="PRO_0000041607" description="Zeta-carotene desaturase, chloroplastic/chromoplastic">
    <location>
        <begin status="unknown"/>
        <end position="588"/>
    </location>
</feature>
<gene>
    <name type="primary">ZDS</name>
</gene>
<sequence>MATSSAYLSCPATSATGKKHVFPNGSPGFLVFGGTRLSNRLVTRKSVIRADLDSMVSDMSTNAPKGLFPPEPEHYRGPKLKVAIIGAGLAGMSTAVELLDQGHEVDIYESRTFIGGKVGSFVDRRGNHIEMGLHVFFGCYNNLFRLLKKVGAEKNLLVKEHTHTFVNKGGEIGELDFRFPVGAPLHGINAFLSTNQLKIYDKARNAVALALSPVVRALVDPDGALQQIRDLDNVSFSEWFLSKGGTRASIQRMWDPVAYALGFIDCDNMSARCMLTIFALFATKTEASLLRMLKGSPDVYLSGPIKKYIMDKGGRFHLRWGCREVLYETSSDGSMYVSGLAMSKATQKKIVKADAYVAACDVPGIKRLVPQKWRELEFFDNIYKLVGVPVVTVQLRYNGWVTELQDLERSRQLKRAAGLDNLLYTPDADFSCFADLALASPDDYYIEGQGSLLQCVLTPGDPYMPLSNDEIIKRVTKQVLALFPSSQGLEVTWSSVLKIGQSLYREGPGKDPFRPDQKTPVENFFLAGSYTKQDYIDSMEGATLSGRQASAYICNVGEQLMALRKKITAAELNDISKGVSLSDELSLV</sequence>
<keyword id="KW-0125">Carotenoid biosynthesis</keyword>
<keyword id="KW-0150">Chloroplast</keyword>
<keyword id="KW-0957">Chromoplast</keyword>
<keyword id="KW-0274">FAD</keyword>
<keyword id="KW-0285">Flavoprotein</keyword>
<keyword id="KW-0520">NAD</keyword>
<keyword id="KW-0560">Oxidoreductase</keyword>
<keyword id="KW-0934">Plastid</keyword>
<keyword id="KW-1185">Reference proteome</keyword>
<keyword id="KW-0809">Transit peptide</keyword>